<name>PURL_HALMA</name>
<accession>Q5V2D3</accession>
<proteinExistence type="inferred from homology"/>
<keyword id="KW-0067">ATP-binding</keyword>
<keyword id="KW-0963">Cytoplasm</keyword>
<keyword id="KW-0436">Ligase</keyword>
<keyword id="KW-0460">Magnesium</keyword>
<keyword id="KW-0479">Metal-binding</keyword>
<keyword id="KW-0547">Nucleotide-binding</keyword>
<keyword id="KW-0658">Purine biosynthesis</keyword>
<keyword id="KW-1185">Reference proteome</keyword>
<dbReference type="EC" id="6.3.5.3" evidence="1"/>
<dbReference type="EMBL" id="AY596297">
    <property type="protein sequence ID" value="AAV46319.1"/>
    <property type="molecule type" value="Genomic_DNA"/>
</dbReference>
<dbReference type="RefSeq" id="WP_011223595.1">
    <property type="nucleotide sequence ID" value="NC_006396.1"/>
</dbReference>
<dbReference type="SMR" id="Q5V2D3"/>
<dbReference type="STRING" id="272569.rrnAC1390"/>
<dbReference type="PaxDb" id="272569-rrnAC1390"/>
<dbReference type="EnsemblBacteria" id="AAV46319">
    <property type="protein sequence ID" value="AAV46319"/>
    <property type="gene ID" value="rrnAC1390"/>
</dbReference>
<dbReference type="GeneID" id="40152358"/>
<dbReference type="KEGG" id="hma:rrnAC1390"/>
<dbReference type="PATRIC" id="fig|272569.17.peg.2086"/>
<dbReference type="eggNOG" id="arCOG00641">
    <property type="taxonomic scope" value="Archaea"/>
</dbReference>
<dbReference type="HOGENOM" id="CLU_003100_0_1_2"/>
<dbReference type="UniPathway" id="UPA00074">
    <property type="reaction ID" value="UER00128"/>
</dbReference>
<dbReference type="Proteomes" id="UP000001169">
    <property type="component" value="Chromosome I"/>
</dbReference>
<dbReference type="GO" id="GO:0005737">
    <property type="term" value="C:cytoplasm"/>
    <property type="evidence" value="ECO:0007669"/>
    <property type="project" value="UniProtKB-SubCell"/>
</dbReference>
<dbReference type="GO" id="GO:0005524">
    <property type="term" value="F:ATP binding"/>
    <property type="evidence" value="ECO:0007669"/>
    <property type="project" value="UniProtKB-UniRule"/>
</dbReference>
<dbReference type="GO" id="GO:0000287">
    <property type="term" value="F:magnesium ion binding"/>
    <property type="evidence" value="ECO:0007669"/>
    <property type="project" value="UniProtKB-UniRule"/>
</dbReference>
<dbReference type="GO" id="GO:0004642">
    <property type="term" value="F:phosphoribosylformylglycinamidine synthase activity"/>
    <property type="evidence" value="ECO:0007669"/>
    <property type="project" value="UniProtKB-UniRule"/>
</dbReference>
<dbReference type="GO" id="GO:0006189">
    <property type="term" value="P:'de novo' IMP biosynthetic process"/>
    <property type="evidence" value="ECO:0007669"/>
    <property type="project" value="UniProtKB-UniRule"/>
</dbReference>
<dbReference type="CDD" id="cd02203">
    <property type="entry name" value="PurL_repeat1"/>
    <property type="match status" value="1"/>
</dbReference>
<dbReference type="CDD" id="cd02204">
    <property type="entry name" value="PurL_repeat2"/>
    <property type="match status" value="1"/>
</dbReference>
<dbReference type="Gene3D" id="3.90.650.10">
    <property type="entry name" value="PurM-like C-terminal domain"/>
    <property type="match status" value="2"/>
</dbReference>
<dbReference type="Gene3D" id="3.30.1330.10">
    <property type="entry name" value="PurM-like, N-terminal domain"/>
    <property type="match status" value="2"/>
</dbReference>
<dbReference type="HAMAP" id="MF_00420">
    <property type="entry name" value="PurL_2"/>
    <property type="match status" value="1"/>
</dbReference>
<dbReference type="InterPro" id="IPR010074">
    <property type="entry name" value="PRibForGlyAmidine_synth_PurL"/>
</dbReference>
<dbReference type="InterPro" id="IPR041609">
    <property type="entry name" value="PurL_linker"/>
</dbReference>
<dbReference type="InterPro" id="IPR010918">
    <property type="entry name" value="PurM-like_C_dom"/>
</dbReference>
<dbReference type="InterPro" id="IPR036676">
    <property type="entry name" value="PurM-like_C_sf"/>
</dbReference>
<dbReference type="InterPro" id="IPR016188">
    <property type="entry name" value="PurM-like_N"/>
</dbReference>
<dbReference type="InterPro" id="IPR036921">
    <property type="entry name" value="PurM-like_N_sf"/>
</dbReference>
<dbReference type="NCBIfam" id="TIGR01736">
    <property type="entry name" value="FGAM_synth_II"/>
    <property type="match status" value="1"/>
</dbReference>
<dbReference type="NCBIfam" id="NF002290">
    <property type="entry name" value="PRK01213.1"/>
    <property type="match status" value="1"/>
</dbReference>
<dbReference type="PANTHER" id="PTHR43555">
    <property type="entry name" value="PHOSPHORIBOSYLFORMYLGLYCINAMIDINE SYNTHASE SUBUNIT PURL"/>
    <property type="match status" value="1"/>
</dbReference>
<dbReference type="PANTHER" id="PTHR43555:SF1">
    <property type="entry name" value="PHOSPHORIBOSYLFORMYLGLYCINAMIDINE SYNTHASE SUBUNIT PURL"/>
    <property type="match status" value="1"/>
</dbReference>
<dbReference type="Pfam" id="PF00586">
    <property type="entry name" value="AIRS"/>
    <property type="match status" value="2"/>
</dbReference>
<dbReference type="Pfam" id="PF02769">
    <property type="entry name" value="AIRS_C"/>
    <property type="match status" value="2"/>
</dbReference>
<dbReference type="Pfam" id="PF18072">
    <property type="entry name" value="FGAR-AT_linker"/>
    <property type="match status" value="1"/>
</dbReference>
<dbReference type="PIRSF" id="PIRSF001587">
    <property type="entry name" value="FGAM_synthase_II"/>
    <property type="match status" value="1"/>
</dbReference>
<dbReference type="SUPFAM" id="SSF56042">
    <property type="entry name" value="PurM C-terminal domain-like"/>
    <property type="match status" value="2"/>
</dbReference>
<dbReference type="SUPFAM" id="SSF55326">
    <property type="entry name" value="PurM N-terminal domain-like"/>
    <property type="match status" value="2"/>
</dbReference>
<evidence type="ECO:0000255" key="1">
    <source>
        <dbReference type="HAMAP-Rule" id="MF_00420"/>
    </source>
</evidence>
<feature type="chain" id="PRO_0000100510" description="Phosphoribosylformylglycinamidine synthase subunit PurL">
    <location>
        <begin position="1"/>
        <end position="720"/>
    </location>
</feature>
<feature type="active site" evidence="1">
    <location>
        <position position="34"/>
    </location>
</feature>
<feature type="active site" description="Proton acceptor" evidence="1">
    <location>
        <position position="85"/>
    </location>
</feature>
<feature type="binding site" evidence="1">
    <location>
        <position position="37"/>
    </location>
    <ligand>
        <name>ATP</name>
        <dbReference type="ChEBI" id="CHEBI:30616"/>
    </ligand>
</feature>
<feature type="binding site" evidence="1">
    <location>
        <position position="83"/>
    </location>
    <ligand>
        <name>Mg(2+)</name>
        <dbReference type="ChEBI" id="CHEBI:18420"/>
        <label>1</label>
    </ligand>
</feature>
<feature type="binding site" evidence="1">
    <location>
        <begin position="84"/>
        <end position="87"/>
    </location>
    <ligand>
        <name>substrate</name>
    </ligand>
</feature>
<feature type="binding site" evidence="1">
    <location>
        <position position="106"/>
    </location>
    <ligand>
        <name>substrate</name>
    </ligand>
</feature>
<feature type="binding site" evidence="1">
    <location>
        <position position="107"/>
    </location>
    <ligand>
        <name>Mg(2+)</name>
        <dbReference type="ChEBI" id="CHEBI:18420"/>
        <label>2</label>
    </ligand>
</feature>
<feature type="binding site" evidence="1">
    <location>
        <position position="231"/>
    </location>
    <ligand>
        <name>substrate</name>
    </ligand>
</feature>
<feature type="binding site" evidence="1">
    <location>
        <position position="259"/>
    </location>
    <ligand>
        <name>Mg(2+)</name>
        <dbReference type="ChEBI" id="CHEBI:18420"/>
        <label>2</label>
    </ligand>
</feature>
<feature type="binding site" evidence="1">
    <location>
        <begin position="303"/>
        <end position="305"/>
    </location>
    <ligand>
        <name>substrate</name>
    </ligand>
</feature>
<feature type="binding site" evidence="1">
    <location>
        <position position="480"/>
    </location>
    <ligand>
        <name>ATP</name>
        <dbReference type="ChEBI" id="CHEBI:30616"/>
    </ligand>
</feature>
<feature type="binding site" evidence="1">
    <location>
        <position position="517"/>
    </location>
    <ligand>
        <name>ATP</name>
        <dbReference type="ChEBI" id="CHEBI:30616"/>
    </ligand>
</feature>
<feature type="binding site" evidence="1">
    <location>
        <position position="518"/>
    </location>
    <ligand>
        <name>Mg(2+)</name>
        <dbReference type="ChEBI" id="CHEBI:18420"/>
        <label>1</label>
    </ligand>
</feature>
<feature type="binding site" evidence="1">
    <location>
        <position position="520"/>
    </location>
    <ligand>
        <name>substrate</name>
    </ligand>
</feature>
<comment type="function">
    <text evidence="1">Part of the phosphoribosylformylglycinamidine synthase complex involved in the purines biosynthetic pathway. Catalyzes the ATP-dependent conversion of formylglycinamide ribonucleotide (FGAR) and glutamine to yield formylglycinamidine ribonucleotide (FGAM) and glutamate. The FGAM synthase complex is composed of three subunits. PurQ produces an ammonia molecule by converting glutamine to glutamate. PurL transfers the ammonia molecule to FGAR to form FGAM in an ATP-dependent manner. PurS interacts with PurQ and PurL and is thought to assist in the transfer of the ammonia molecule from PurQ to PurL.</text>
</comment>
<comment type="catalytic activity">
    <reaction evidence="1">
        <text>N(2)-formyl-N(1)-(5-phospho-beta-D-ribosyl)glycinamide + L-glutamine + ATP + H2O = 2-formamido-N(1)-(5-O-phospho-beta-D-ribosyl)acetamidine + L-glutamate + ADP + phosphate + H(+)</text>
        <dbReference type="Rhea" id="RHEA:17129"/>
        <dbReference type="ChEBI" id="CHEBI:15377"/>
        <dbReference type="ChEBI" id="CHEBI:15378"/>
        <dbReference type="ChEBI" id="CHEBI:29985"/>
        <dbReference type="ChEBI" id="CHEBI:30616"/>
        <dbReference type="ChEBI" id="CHEBI:43474"/>
        <dbReference type="ChEBI" id="CHEBI:58359"/>
        <dbReference type="ChEBI" id="CHEBI:147286"/>
        <dbReference type="ChEBI" id="CHEBI:147287"/>
        <dbReference type="ChEBI" id="CHEBI:456216"/>
        <dbReference type="EC" id="6.3.5.3"/>
    </reaction>
</comment>
<comment type="pathway">
    <text evidence="1">Purine metabolism; IMP biosynthesis via de novo pathway; 5-amino-1-(5-phospho-D-ribosyl)imidazole from N(2)-formyl-N(1)-(5-phospho-D-ribosyl)glycinamide: step 1/2.</text>
</comment>
<comment type="subunit">
    <text evidence="1">Monomer. Part of the FGAM synthase complex composed of 1 PurL, 1 PurQ and 2 PurS subunits.</text>
</comment>
<comment type="subcellular location">
    <subcellularLocation>
        <location evidence="1">Cytoplasm</location>
    </subcellularLocation>
</comment>
<comment type="similarity">
    <text evidence="1">Belongs to the FGAMS family.</text>
</comment>
<sequence length="720" mass="75951">MSLSDADHELVVEEIGREPTRAEAALFENLWSEHCAYRSSRPLLSAFDSEGDQVVIGPGDDAAVVSLPSHGDGEEMYITMGVESHNHPSYVDPFDGAATGVGGIVRDTLSMGAYPIALADCLYFGDFDREHSRYLFEGVVEGISHYGNCIGVPTVTGSVAFHDDYEGNPLVNVSCIGLLEPERTITAEAQEPGNKLVLVGNATGRDGLGGASFASEDLAEDAETEDRPAVQVGDPYSEKLLVECNEALLDEELVESARDLGAAGLGGASSELIAKGGLGARIELDRVHEREPNMNAMEYLLAESQERMVYEVAPEDVDRVAELAERFDLGCSVIGELTEPGTNYVCTFEGETVVDVDAAFLGDGAPMNDLPSDAPPKQERDLPTVSLDEAFERIVSSPNCASKRWVYRQYDHEVQVRTSVLPGDDAALLAIREAGTGLAFSAGADPNWTDAAPYEGARAVALENATNVAAKGATPHAAVDCLNGGNPEKPDVYGGFKGIVDGLADMCSDLDVPVVGGNVSLYNDSQDGPIPPTPTLALVGVKEGYDAPPLSLSGEGRLVVVGDTALEGKTDPRLGGSEYTAQFGGTDRFPALPVDSTDVVETIAEVADADHVLASHDVSHGGLAVTLAEMVHEDAGASVEIGTTEHGTPARLLFNERPGRVVFETTDPAAVREAFDGVAPVTELGEANDSNGLDITVNDETLAYNVADIADLRSVIDDEL</sequence>
<organism>
    <name type="scientific">Haloarcula marismortui (strain ATCC 43049 / DSM 3752 / JCM 8966 / VKM B-1809)</name>
    <name type="common">Halobacterium marismortui</name>
    <dbReference type="NCBI Taxonomy" id="272569"/>
    <lineage>
        <taxon>Archaea</taxon>
        <taxon>Methanobacteriati</taxon>
        <taxon>Methanobacteriota</taxon>
        <taxon>Stenosarchaea group</taxon>
        <taxon>Halobacteria</taxon>
        <taxon>Halobacteriales</taxon>
        <taxon>Haloarculaceae</taxon>
        <taxon>Haloarcula</taxon>
    </lineage>
</organism>
<reference key="1">
    <citation type="journal article" date="2004" name="Genome Res.">
        <title>Genome sequence of Haloarcula marismortui: a halophilic archaeon from the Dead Sea.</title>
        <authorList>
            <person name="Baliga N.S."/>
            <person name="Bonneau R."/>
            <person name="Facciotti M.T."/>
            <person name="Pan M."/>
            <person name="Glusman G."/>
            <person name="Deutsch E.W."/>
            <person name="Shannon P."/>
            <person name="Chiu Y."/>
            <person name="Weng R.S."/>
            <person name="Gan R.R."/>
            <person name="Hung P."/>
            <person name="Date S.V."/>
            <person name="Marcotte E."/>
            <person name="Hood L."/>
            <person name="Ng W.V."/>
        </authorList>
    </citation>
    <scope>NUCLEOTIDE SEQUENCE [LARGE SCALE GENOMIC DNA]</scope>
    <source>
        <strain>ATCC 43049 / DSM 3752 / JCM 8966 / VKM B-1809</strain>
    </source>
</reference>
<protein>
    <recommendedName>
        <fullName evidence="1">Phosphoribosylformylglycinamidine synthase subunit PurL</fullName>
        <shortName evidence="1">FGAM synthase</shortName>
        <ecNumber evidence="1">6.3.5.3</ecNumber>
    </recommendedName>
    <alternativeName>
        <fullName evidence="1">Formylglycinamide ribonucleotide amidotransferase subunit II</fullName>
        <shortName evidence="1">FGAR amidotransferase II</shortName>
        <shortName evidence="1">FGAR-AT II</shortName>
    </alternativeName>
    <alternativeName>
        <fullName evidence="1">Glutamine amidotransferase PurL</fullName>
    </alternativeName>
    <alternativeName>
        <fullName evidence="1">Phosphoribosylformylglycinamidine synthase subunit II</fullName>
    </alternativeName>
</protein>
<gene>
    <name evidence="1" type="primary">purL</name>
    <name type="ordered locus">rrnAC1390</name>
</gene>